<dbReference type="EMBL" id="AE015929">
    <property type="protein sequence ID" value="AAO05303.1"/>
    <property type="molecule type" value="Genomic_DNA"/>
</dbReference>
<dbReference type="RefSeq" id="NP_765259.1">
    <property type="nucleotide sequence ID" value="NC_004461.1"/>
</dbReference>
<dbReference type="RefSeq" id="WP_002457122.1">
    <property type="nucleotide sequence ID" value="NZ_WBME01000021.1"/>
</dbReference>
<dbReference type="SMR" id="Q8CNJ3"/>
<dbReference type="KEGG" id="sep:SE_1704"/>
<dbReference type="PATRIC" id="fig|176280.10.peg.1665"/>
<dbReference type="eggNOG" id="COG0711">
    <property type="taxonomic scope" value="Bacteria"/>
</dbReference>
<dbReference type="HOGENOM" id="CLU_079215_4_2_9"/>
<dbReference type="OrthoDB" id="282095at2"/>
<dbReference type="Proteomes" id="UP000001411">
    <property type="component" value="Chromosome"/>
</dbReference>
<dbReference type="GO" id="GO:0005886">
    <property type="term" value="C:plasma membrane"/>
    <property type="evidence" value="ECO:0007669"/>
    <property type="project" value="UniProtKB-SubCell"/>
</dbReference>
<dbReference type="GO" id="GO:0045259">
    <property type="term" value="C:proton-transporting ATP synthase complex"/>
    <property type="evidence" value="ECO:0007669"/>
    <property type="project" value="UniProtKB-KW"/>
</dbReference>
<dbReference type="GO" id="GO:0046933">
    <property type="term" value="F:proton-transporting ATP synthase activity, rotational mechanism"/>
    <property type="evidence" value="ECO:0007669"/>
    <property type="project" value="UniProtKB-UniRule"/>
</dbReference>
<dbReference type="GO" id="GO:0046961">
    <property type="term" value="F:proton-transporting ATPase activity, rotational mechanism"/>
    <property type="evidence" value="ECO:0007669"/>
    <property type="project" value="TreeGrafter"/>
</dbReference>
<dbReference type="CDD" id="cd06503">
    <property type="entry name" value="ATP-synt_Fo_b"/>
    <property type="match status" value="1"/>
</dbReference>
<dbReference type="HAMAP" id="MF_01398">
    <property type="entry name" value="ATP_synth_b_bprime"/>
    <property type="match status" value="1"/>
</dbReference>
<dbReference type="InterPro" id="IPR028987">
    <property type="entry name" value="ATP_synth_B-like_membr_sf"/>
</dbReference>
<dbReference type="InterPro" id="IPR002146">
    <property type="entry name" value="ATP_synth_b/b'su_bac/chlpt"/>
</dbReference>
<dbReference type="InterPro" id="IPR005864">
    <property type="entry name" value="ATP_synth_F0_bsu_bac"/>
</dbReference>
<dbReference type="InterPro" id="IPR050059">
    <property type="entry name" value="ATP_synthase_B_chain"/>
</dbReference>
<dbReference type="NCBIfam" id="TIGR01144">
    <property type="entry name" value="ATP_synt_b"/>
    <property type="match status" value="1"/>
</dbReference>
<dbReference type="NCBIfam" id="NF009987">
    <property type="entry name" value="PRK13453.1"/>
    <property type="match status" value="1"/>
</dbReference>
<dbReference type="PANTHER" id="PTHR33445:SF1">
    <property type="entry name" value="ATP SYNTHASE SUBUNIT B"/>
    <property type="match status" value="1"/>
</dbReference>
<dbReference type="PANTHER" id="PTHR33445">
    <property type="entry name" value="ATP SYNTHASE SUBUNIT B', CHLOROPLASTIC"/>
    <property type="match status" value="1"/>
</dbReference>
<dbReference type="Pfam" id="PF00430">
    <property type="entry name" value="ATP-synt_B"/>
    <property type="match status" value="1"/>
</dbReference>
<dbReference type="SUPFAM" id="SSF81573">
    <property type="entry name" value="F1F0 ATP synthase subunit B, membrane domain"/>
    <property type="match status" value="1"/>
</dbReference>
<evidence type="ECO:0000255" key="1">
    <source>
        <dbReference type="HAMAP-Rule" id="MF_01398"/>
    </source>
</evidence>
<protein>
    <recommendedName>
        <fullName evidence="1">ATP synthase subunit b</fullName>
    </recommendedName>
    <alternativeName>
        <fullName evidence="1">ATP synthase F(0) sector subunit b</fullName>
    </alternativeName>
    <alternativeName>
        <fullName evidence="1">ATPase subunit I</fullName>
    </alternativeName>
    <alternativeName>
        <fullName evidence="1">F-type ATPase subunit b</fullName>
        <shortName evidence="1">F-ATPase subunit b</shortName>
    </alternativeName>
</protein>
<name>ATPF_STAES</name>
<sequence>MTATANTFILGAGVEWGTTFVTLVTFVILIILLKKFAWGPLKEVMDKRERDINKDIDDAEQAKINAQKLEEENRKTLKETQDEVQKILDDAKIQARKQHEEIIHEANEKANGMIETAQSEINSQKERAISDINNQVSELSVLIASKVLRKEISEQDQKELVEKYLKEAGDK</sequence>
<gene>
    <name evidence="1" type="primary">atpF</name>
    <name type="ordered locus">SE_1704</name>
</gene>
<organism>
    <name type="scientific">Staphylococcus epidermidis (strain ATCC 12228 / FDA PCI 1200)</name>
    <dbReference type="NCBI Taxonomy" id="176280"/>
    <lineage>
        <taxon>Bacteria</taxon>
        <taxon>Bacillati</taxon>
        <taxon>Bacillota</taxon>
        <taxon>Bacilli</taxon>
        <taxon>Bacillales</taxon>
        <taxon>Staphylococcaceae</taxon>
        <taxon>Staphylococcus</taxon>
    </lineage>
</organism>
<keyword id="KW-0066">ATP synthesis</keyword>
<keyword id="KW-1003">Cell membrane</keyword>
<keyword id="KW-0138">CF(0)</keyword>
<keyword id="KW-0375">Hydrogen ion transport</keyword>
<keyword id="KW-0406">Ion transport</keyword>
<keyword id="KW-0472">Membrane</keyword>
<keyword id="KW-0812">Transmembrane</keyword>
<keyword id="KW-1133">Transmembrane helix</keyword>
<keyword id="KW-0813">Transport</keyword>
<comment type="function">
    <text evidence="1">F(1)F(0) ATP synthase produces ATP from ADP in the presence of a proton or sodium gradient. F-type ATPases consist of two structural domains, F(1) containing the extramembraneous catalytic core and F(0) containing the membrane proton channel, linked together by a central stalk and a peripheral stalk. During catalysis, ATP synthesis in the catalytic domain of F(1) is coupled via a rotary mechanism of the central stalk subunits to proton translocation.</text>
</comment>
<comment type="function">
    <text evidence="1">Component of the F(0) channel, it forms part of the peripheral stalk, linking F(1) to F(0).</text>
</comment>
<comment type="subunit">
    <text evidence="1">F-type ATPases have 2 components, F(1) - the catalytic core - and F(0) - the membrane proton channel. F(1) has five subunits: alpha(3), beta(3), gamma(1), delta(1), epsilon(1). F(0) has three main subunits: a(1), b(2) and c(10-14). The alpha and beta chains form an alternating ring which encloses part of the gamma chain. F(1) is attached to F(0) by a central stalk formed by the gamma and epsilon chains, while a peripheral stalk is formed by the delta and b chains.</text>
</comment>
<comment type="subcellular location">
    <subcellularLocation>
        <location evidence="1">Cell membrane</location>
        <topology evidence="1">Single-pass membrane protein</topology>
    </subcellularLocation>
</comment>
<comment type="similarity">
    <text evidence="1">Belongs to the ATPase B chain family.</text>
</comment>
<proteinExistence type="inferred from homology"/>
<reference key="1">
    <citation type="journal article" date="2003" name="Mol. Microbiol.">
        <title>Genome-based analysis of virulence genes in a non-biofilm-forming Staphylococcus epidermidis strain (ATCC 12228).</title>
        <authorList>
            <person name="Zhang Y.-Q."/>
            <person name="Ren S.-X."/>
            <person name="Li H.-L."/>
            <person name="Wang Y.-X."/>
            <person name="Fu G."/>
            <person name="Yang J."/>
            <person name="Qin Z.-Q."/>
            <person name="Miao Y.-G."/>
            <person name="Wang W.-Y."/>
            <person name="Chen R.-S."/>
            <person name="Shen Y."/>
            <person name="Chen Z."/>
            <person name="Yuan Z.-H."/>
            <person name="Zhao G.-P."/>
            <person name="Qu D."/>
            <person name="Danchin A."/>
            <person name="Wen Y.-M."/>
        </authorList>
    </citation>
    <scope>NUCLEOTIDE SEQUENCE [LARGE SCALE GENOMIC DNA]</scope>
    <source>
        <strain>ATCC 12228 / FDA PCI 1200</strain>
    </source>
</reference>
<feature type="chain" id="PRO_0000223704" description="ATP synthase subunit b">
    <location>
        <begin position="1"/>
        <end position="171"/>
    </location>
</feature>
<feature type="transmembrane region" description="Helical" evidence="1">
    <location>
        <begin position="13"/>
        <end position="33"/>
    </location>
</feature>
<accession>Q8CNJ3</accession>